<protein>
    <recommendedName>
        <fullName evidence="1">Probable DNA ligase</fullName>
        <ecNumber evidence="1">6.5.1.1</ecNumber>
    </recommendedName>
    <alternativeName>
        <fullName evidence="1">Polydeoxyribonucleotide synthase [ATP]</fullName>
    </alternativeName>
</protein>
<dbReference type="EC" id="6.5.1.1" evidence="1"/>
<dbReference type="EMBL" id="LT708304">
    <property type="protein sequence ID" value="SIU01714.1"/>
    <property type="molecule type" value="Genomic_DNA"/>
</dbReference>
<dbReference type="RefSeq" id="NP_856734.1">
    <property type="nucleotide sequence ID" value="NC_002945.3"/>
</dbReference>
<dbReference type="RefSeq" id="WP_003415991.1">
    <property type="nucleotide sequence ID" value="NC_002945.4"/>
</dbReference>
<dbReference type="SMR" id="Q7TTR7"/>
<dbReference type="KEGG" id="mbo:BQ2027_MB3089"/>
<dbReference type="PATRIC" id="fig|233413.5.peg.3393"/>
<dbReference type="Proteomes" id="UP000001419">
    <property type="component" value="Chromosome"/>
</dbReference>
<dbReference type="GO" id="GO:0005524">
    <property type="term" value="F:ATP binding"/>
    <property type="evidence" value="ECO:0007669"/>
    <property type="project" value="UniProtKB-UniRule"/>
</dbReference>
<dbReference type="GO" id="GO:0003677">
    <property type="term" value="F:DNA binding"/>
    <property type="evidence" value="ECO:0007669"/>
    <property type="project" value="InterPro"/>
</dbReference>
<dbReference type="GO" id="GO:0003910">
    <property type="term" value="F:DNA ligase (ATP) activity"/>
    <property type="evidence" value="ECO:0007669"/>
    <property type="project" value="UniProtKB-UniRule"/>
</dbReference>
<dbReference type="GO" id="GO:0046872">
    <property type="term" value="F:metal ion binding"/>
    <property type="evidence" value="ECO:0007669"/>
    <property type="project" value="UniProtKB-KW"/>
</dbReference>
<dbReference type="GO" id="GO:0051301">
    <property type="term" value="P:cell division"/>
    <property type="evidence" value="ECO:0007669"/>
    <property type="project" value="UniProtKB-KW"/>
</dbReference>
<dbReference type="GO" id="GO:0071897">
    <property type="term" value="P:DNA biosynthetic process"/>
    <property type="evidence" value="ECO:0007669"/>
    <property type="project" value="InterPro"/>
</dbReference>
<dbReference type="GO" id="GO:0006310">
    <property type="term" value="P:DNA recombination"/>
    <property type="evidence" value="ECO:0007669"/>
    <property type="project" value="UniProtKB-UniRule"/>
</dbReference>
<dbReference type="GO" id="GO:0006281">
    <property type="term" value="P:DNA repair"/>
    <property type="evidence" value="ECO:0007669"/>
    <property type="project" value="UniProtKB-UniRule"/>
</dbReference>
<dbReference type="GO" id="GO:0006260">
    <property type="term" value="P:DNA replication"/>
    <property type="evidence" value="ECO:0007669"/>
    <property type="project" value="UniProtKB-UniRule"/>
</dbReference>
<dbReference type="CDD" id="cd07901">
    <property type="entry name" value="Adenylation_DNA_ligase_Arch_LigB"/>
    <property type="match status" value="1"/>
</dbReference>
<dbReference type="CDD" id="cd07972">
    <property type="entry name" value="OBF_DNA_ligase_Arch_LigB"/>
    <property type="match status" value="1"/>
</dbReference>
<dbReference type="FunFam" id="1.10.3260.10:FF:000009">
    <property type="entry name" value="Probable DNA ligase"/>
    <property type="match status" value="1"/>
</dbReference>
<dbReference type="FunFam" id="2.40.50.140:FF:000163">
    <property type="entry name" value="Probable DNA ligase"/>
    <property type="match status" value="1"/>
</dbReference>
<dbReference type="FunFam" id="3.30.470.30:FF:000012">
    <property type="entry name" value="Probable DNA ligase"/>
    <property type="match status" value="1"/>
</dbReference>
<dbReference type="Gene3D" id="1.10.3260.10">
    <property type="entry name" value="DNA ligase, ATP-dependent, N-terminal domain"/>
    <property type="match status" value="1"/>
</dbReference>
<dbReference type="Gene3D" id="3.30.470.30">
    <property type="entry name" value="DNA ligase/mRNA capping enzyme"/>
    <property type="match status" value="1"/>
</dbReference>
<dbReference type="Gene3D" id="2.40.50.140">
    <property type="entry name" value="Nucleic acid-binding proteins"/>
    <property type="match status" value="1"/>
</dbReference>
<dbReference type="HAMAP" id="MF_00407">
    <property type="entry name" value="DNA_ligase"/>
    <property type="match status" value="1"/>
</dbReference>
<dbReference type="InterPro" id="IPR050191">
    <property type="entry name" value="ATP-dep_DNA_ligase"/>
</dbReference>
<dbReference type="InterPro" id="IPR022865">
    <property type="entry name" value="DNA_ligae_ATP-dep_bac/arc"/>
</dbReference>
<dbReference type="InterPro" id="IPR000977">
    <property type="entry name" value="DNA_ligase_ATP-dep"/>
</dbReference>
<dbReference type="InterPro" id="IPR012309">
    <property type="entry name" value="DNA_ligase_ATP-dep_C"/>
</dbReference>
<dbReference type="InterPro" id="IPR012310">
    <property type="entry name" value="DNA_ligase_ATP-dep_cent"/>
</dbReference>
<dbReference type="InterPro" id="IPR016059">
    <property type="entry name" value="DNA_ligase_ATP-dep_CS"/>
</dbReference>
<dbReference type="InterPro" id="IPR012308">
    <property type="entry name" value="DNA_ligase_ATP-dep_N"/>
</dbReference>
<dbReference type="InterPro" id="IPR036599">
    <property type="entry name" value="DNA_ligase_N_sf"/>
</dbReference>
<dbReference type="InterPro" id="IPR012340">
    <property type="entry name" value="NA-bd_OB-fold"/>
</dbReference>
<dbReference type="NCBIfam" id="TIGR00574">
    <property type="entry name" value="dnl1"/>
    <property type="match status" value="1"/>
</dbReference>
<dbReference type="NCBIfam" id="NF002868">
    <property type="entry name" value="PRK03180.1"/>
    <property type="match status" value="1"/>
</dbReference>
<dbReference type="PANTHER" id="PTHR45674">
    <property type="entry name" value="DNA LIGASE 1/3 FAMILY MEMBER"/>
    <property type="match status" value="1"/>
</dbReference>
<dbReference type="PANTHER" id="PTHR45674:SF13">
    <property type="entry name" value="DNA LIGASE-RELATED"/>
    <property type="match status" value="1"/>
</dbReference>
<dbReference type="Pfam" id="PF04679">
    <property type="entry name" value="DNA_ligase_A_C"/>
    <property type="match status" value="1"/>
</dbReference>
<dbReference type="Pfam" id="PF01068">
    <property type="entry name" value="DNA_ligase_A_M"/>
    <property type="match status" value="1"/>
</dbReference>
<dbReference type="Pfam" id="PF04675">
    <property type="entry name" value="DNA_ligase_A_N"/>
    <property type="match status" value="1"/>
</dbReference>
<dbReference type="SUPFAM" id="SSF117018">
    <property type="entry name" value="ATP-dependent DNA ligase DNA-binding domain"/>
    <property type="match status" value="1"/>
</dbReference>
<dbReference type="SUPFAM" id="SSF56091">
    <property type="entry name" value="DNA ligase/mRNA capping enzyme, catalytic domain"/>
    <property type="match status" value="1"/>
</dbReference>
<dbReference type="SUPFAM" id="SSF50249">
    <property type="entry name" value="Nucleic acid-binding proteins"/>
    <property type="match status" value="1"/>
</dbReference>
<dbReference type="PROSITE" id="PS00697">
    <property type="entry name" value="DNA_LIGASE_A1"/>
    <property type="match status" value="1"/>
</dbReference>
<dbReference type="PROSITE" id="PS50160">
    <property type="entry name" value="DNA_LIGASE_A3"/>
    <property type="match status" value="1"/>
</dbReference>
<name>DNLI_MYCBO</name>
<organism>
    <name type="scientific">Mycobacterium bovis (strain ATCC BAA-935 / AF2122/97)</name>
    <dbReference type="NCBI Taxonomy" id="233413"/>
    <lineage>
        <taxon>Bacteria</taxon>
        <taxon>Bacillati</taxon>
        <taxon>Actinomycetota</taxon>
        <taxon>Actinomycetes</taxon>
        <taxon>Mycobacteriales</taxon>
        <taxon>Mycobacteriaceae</taxon>
        <taxon>Mycobacterium</taxon>
        <taxon>Mycobacterium tuberculosis complex</taxon>
    </lineage>
</organism>
<sequence>MLLHDVAITSMDVAATSSRLTKVARIAALLHRAAPDTQLVTIIVSWLSGELPQRHIGVGWAALRSLPPPAPQPALTVTGVDATLSKIGTLSGKGSQAQRAALVAELFSAATEAEQTFLLRLLGGELRQGAKGGIMADAVAQAAGLPAATVQRAAMLGGDLAAAAAAGLSGAALDTFTLRVGRPIGPMLAQTATSVHDALERHGGTTIFEAKLDGARVQIHRANDQVRIYTRSLDDVTARLPEVVEATLALPVRDLVADGEAIALCPDNRPQRFQVTASRFGRSVDVAAARATQPLSVFFFDILHRDGTDLLEAPTTERLAALDALVPARHRVDRLITSDPTDAANFLDATLAAGHEGVMAKAPAARYLAGRRGAGWLKVKPVHTLDLVVLAVEWGSGRRRGKLSNIHLGARDPATGGFVMVGKTFKGMTDAMLDWQTTRFHEIAVGPTDGYVVQLRPEQVVEVALDGVQRSSRYPGGLALRFARVVRYRADKDPAEADTIDAVRALY</sequence>
<proteinExistence type="inferred from homology"/>
<comment type="function">
    <text evidence="1">DNA ligase that seals nicks in double-stranded DNA during DNA replication, DNA recombination and DNA repair.</text>
</comment>
<comment type="catalytic activity">
    <reaction evidence="1">
        <text>ATP + (deoxyribonucleotide)n-3'-hydroxyl + 5'-phospho-(deoxyribonucleotide)m = (deoxyribonucleotide)n+m + AMP + diphosphate.</text>
        <dbReference type="EC" id="6.5.1.1"/>
    </reaction>
</comment>
<comment type="cofactor">
    <cofactor evidence="1">
        <name>Mg(2+)</name>
        <dbReference type="ChEBI" id="CHEBI:18420"/>
    </cofactor>
</comment>
<comment type="similarity">
    <text evidence="1">Belongs to the ATP-dependent DNA ligase family.</text>
</comment>
<gene>
    <name evidence="1" type="primary">lig</name>
    <name type="ordered locus">BQ2027_MB3089</name>
</gene>
<evidence type="ECO:0000255" key="1">
    <source>
        <dbReference type="HAMAP-Rule" id="MF_00407"/>
    </source>
</evidence>
<keyword id="KW-0067">ATP-binding</keyword>
<keyword id="KW-0131">Cell cycle</keyword>
<keyword id="KW-0132">Cell division</keyword>
<keyword id="KW-0227">DNA damage</keyword>
<keyword id="KW-0233">DNA recombination</keyword>
<keyword id="KW-0234">DNA repair</keyword>
<keyword id="KW-0235">DNA replication</keyword>
<keyword id="KW-0436">Ligase</keyword>
<keyword id="KW-0460">Magnesium</keyword>
<keyword id="KW-0479">Metal-binding</keyword>
<keyword id="KW-0547">Nucleotide-binding</keyword>
<keyword id="KW-1185">Reference proteome</keyword>
<reference key="1">
    <citation type="journal article" date="2003" name="Proc. Natl. Acad. Sci. U.S.A.">
        <title>The complete genome sequence of Mycobacterium bovis.</title>
        <authorList>
            <person name="Garnier T."/>
            <person name="Eiglmeier K."/>
            <person name="Camus J.-C."/>
            <person name="Medina N."/>
            <person name="Mansoor H."/>
            <person name="Pryor M."/>
            <person name="Duthoy S."/>
            <person name="Grondin S."/>
            <person name="Lacroix C."/>
            <person name="Monsempe C."/>
            <person name="Simon S."/>
            <person name="Harris B."/>
            <person name="Atkin R."/>
            <person name="Doggett J."/>
            <person name="Mayes R."/>
            <person name="Keating L."/>
            <person name="Wheeler P.R."/>
            <person name="Parkhill J."/>
            <person name="Barrell B.G."/>
            <person name="Cole S.T."/>
            <person name="Gordon S.V."/>
            <person name="Hewinson R.G."/>
        </authorList>
    </citation>
    <scope>NUCLEOTIDE SEQUENCE [LARGE SCALE GENOMIC DNA]</scope>
    <source>
        <strain>ATCC BAA-935 / AF2122/97</strain>
    </source>
</reference>
<reference key="2">
    <citation type="journal article" date="2017" name="Genome Announc.">
        <title>Updated reference genome sequence and annotation of Mycobacterium bovis AF2122/97.</title>
        <authorList>
            <person name="Malone K.M."/>
            <person name="Farrell D."/>
            <person name="Stuber T.P."/>
            <person name="Schubert O.T."/>
            <person name="Aebersold R."/>
            <person name="Robbe-Austerman S."/>
            <person name="Gordon S.V."/>
        </authorList>
    </citation>
    <scope>NUCLEOTIDE SEQUENCE [LARGE SCALE GENOMIC DNA]</scope>
    <scope>GENOME REANNOTATION</scope>
    <source>
        <strain>ATCC BAA-935 / AF2122/97</strain>
    </source>
</reference>
<feature type="chain" id="PRO_0000365222" description="Probable DNA ligase">
    <location>
        <begin position="1"/>
        <end position="507"/>
    </location>
</feature>
<feature type="active site" description="N6-AMP-lysine intermediate" evidence="1">
    <location>
        <position position="211"/>
    </location>
</feature>
<feature type="binding site" evidence="1">
    <location>
        <position position="209"/>
    </location>
    <ligand>
        <name>ATP</name>
        <dbReference type="ChEBI" id="CHEBI:30616"/>
    </ligand>
</feature>
<feature type="binding site" evidence="1">
    <location>
        <position position="216"/>
    </location>
    <ligand>
        <name>ATP</name>
        <dbReference type="ChEBI" id="CHEBI:30616"/>
    </ligand>
</feature>
<feature type="binding site" evidence="1">
    <location>
        <position position="231"/>
    </location>
    <ligand>
        <name>ATP</name>
        <dbReference type="ChEBI" id="CHEBI:30616"/>
    </ligand>
</feature>
<feature type="binding site" evidence="1">
    <location>
        <position position="260"/>
    </location>
    <ligand>
        <name>ATP</name>
        <dbReference type="ChEBI" id="CHEBI:30616"/>
    </ligand>
</feature>
<feature type="binding site" evidence="1">
    <location>
        <position position="300"/>
    </location>
    <ligand>
        <name>ATP</name>
        <dbReference type="ChEBI" id="CHEBI:30616"/>
    </ligand>
</feature>
<feature type="binding site" evidence="1">
    <location>
        <position position="372"/>
    </location>
    <ligand>
        <name>ATP</name>
        <dbReference type="ChEBI" id="CHEBI:30616"/>
    </ligand>
</feature>
<feature type="binding site" evidence="1">
    <location>
        <position position="378"/>
    </location>
    <ligand>
        <name>ATP</name>
        <dbReference type="ChEBI" id="CHEBI:30616"/>
    </ligand>
</feature>
<accession>Q7TTR7</accession>
<accession>A0A1R3Y318</accession>
<accession>X2BMJ3</accession>